<evidence type="ECO:0000255" key="1">
    <source>
        <dbReference type="HAMAP-Rule" id="MF_00253"/>
    </source>
</evidence>
<proteinExistence type="inferred from homology"/>
<keyword id="KW-0030">Aminoacyl-tRNA synthetase</keyword>
<keyword id="KW-0067">ATP-binding</keyword>
<keyword id="KW-0963">Cytoplasm</keyword>
<keyword id="KW-0436">Ligase</keyword>
<keyword id="KW-0547">Nucleotide-binding</keyword>
<keyword id="KW-0648">Protein biosynthesis</keyword>
<accession>O59235</accession>
<comment type="function">
    <text evidence="1">Catalyzes the attachment of glycine to tRNA(Gly).</text>
</comment>
<comment type="catalytic activity">
    <reaction evidence="1">
        <text>tRNA(Gly) + glycine + ATP = glycyl-tRNA(Gly) + AMP + diphosphate</text>
        <dbReference type="Rhea" id="RHEA:16013"/>
        <dbReference type="Rhea" id="RHEA-COMP:9664"/>
        <dbReference type="Rhea" id="RHEA-COMP:9683"/>
        <dbReference type="ChEBI" id="CHEBI:30616"/>
        <dbReference type="ChEBI" id="CHEBI:33019"/>
        <dbReference type="ChEBI" id="CHEBI:57305"/>
        <dbReference type="ChEBI" id="CHEBI:78442"/>
        <dbReference type="ChEBI" id="CHEBI:78522"/>
        <dbReference type="ChEBI" id="CHEBI:456215"/>
        <dbReference type="EC" id="6.1.1.14"/>
    </reaction>
</comment>
<comment type="subcellular location">
    <subcellularLocation>
        <location>Cytoplasm</location>
    </subcellularLocation>
</comment>
<comment type="similarity">
    <text evidence="1">Belongs to the class-II aminoacyl-tRNA synthetase family.</text>
</comment>
<protein>
    <recommendedName>
        <fullName evidence="1">Glycine--tRNA ligase</fullName>
        <ecNumber evidence="1">6.1.1.14</ecNumber>
    </recommendedName>
    <alternativeName>
        <fullName evidence="1">Glycyl-tRNA synthetase</fullName>
        <shortName evidence="1">GlyRS</shortName>
    </alternativeName>
</protein>
<gene>
    <name evidence="1" type="primary">glyS</name>
    <name type="ordered locus">PH1614</name>
</gene>
<reference key="1">
    <citation type="journal article" date="1998" name="DNA Res.">
        <title>Complete sequence and gene organization of the genome of a hyper-thermophilic archaebacterium, Pyrococcus horikoshii OT3.</title>
        <authorList>
            <person name="Kawarabayasi Y."/>
            <person name="Sawada M."/>
            <person name="Horikawa H."/>
            <person name="Haikawa Y."/>
            <person name="Hino Y."/>
            <person name="Yamamoto S."/>
            <person name="Sekine M."/>
            <person name="Baba S."/>
            <person name="Kosugi H."/>
            <person name="Hosoyama A."/>
            <person name="Nagai Y."/>
            <person name="Sakai M."/>
            <person name="Ogura K."/>
            <person name="Otsuka R."/>
            <person name="Nakazawa H."/>
            <person name="Takamiya M."/>
            <person name="Ohfuku Y."/>
            <person name="Funahashi T."/>
            <person name="Tanaka T."/>
            <person name="Kudoh Y."/>
            <person name="Yamazaki J."/>
            <person name="Kushida N."/>
            <person name="Oguchi A."/>
            <person name="Aoki K."/>
            <person name="Yoshizawa T."/>
            <person name="Nakamura Y."/>
            <person name="Robb F.T."/>
            <person name="Horikoshi K."/>
            <person name="Masuchi Y."/>
            <person name="Shizuya H."/>
            <person name="Kikuchi H."/>
        </authorList>
    </citation>
    <scope>NUCLEOTIDE SEQUENCE [LARGE SCALE GENOMIC DNA]</scope>
    <source>
        <strain>ATCC 700860 / DSM 12428 / JCM 9974 / NBRC 100139 / OT-3</strain>
    </source>
</reference>
<dbReference type="EC" id="6.1.1.14" evidence="1"/>
<dbReference type="EMBL" id="BA000001">
    <property type="protein sequence ID" value="BAA30726.1"/>
    <property type="molecule type" value="Genomic_DNA"/>
</dbReference>
<dbReference type="PIR" id="F71040">
    <property type="entry name" value="F71040"/>
</dbReference>
<dbReference type="RefSeq" id="WP_010885687.1">
    <property type="nucleotide sequence ID" value="NC_000961.1"/>
</dbReference>
<dbReference type="SMR" id="O59235"/>
<dbReference type="STRING" id="70601.gene:9378604"/>
<dbReference type="EnsemblBacteria" id="BAA30726">
    <property type="protein sequence ID" value="BAA30726"/>
    <property type="gene ID" value="BAA30726"/>
</dbReference>
<dbReference type="GeneID" id="1442466"/>
<dbReference type="KEGG" id="pho:PH1614"/>
<dbReference type="eggNOG" id="arCOG00405">
    <property type="taxonomic scope" value="Archaea"/>
</dbReference>
<dbReference type="OrthoDB" id="6113at2157"/>
<dbReference type="Proteomes" id="UP000000752">
    <property type="component" value="Chromosome"/>
</dbReference>
<dbReference type="GO" id="GO:0005737">
    <property type="term" value="C:cytoplasm"/>
    <property type="evidence" value="ECO:0007669"/>
    <property type="project" value="UniProtKB-SubCell"/>
</dbReference>
<dbReference type="GO" id="GO:0005524">
    <property type="term" value="F:ATP binding"/>
    <property type="evidence" value="ECO:0007669"/>
    <property type="project" value="UniProtKB-UniRule"/>
</dbReference>
<dbReference type="GO" id="GO:0004820">
    <property type="term" value="F:glycine-tRNA ligase activity"/>
    <property type="evidence" value="ECO:0000250"/>
    <property type="project" value="UniProtKB"/>
</dbReference>
<dbReference type="GO" id="GO:0046983">
    <property type="term" value="F:protein dimerization activity"/>
    <property type="evidence" value="ECO:0000250"/>
    <property type="project" value="UniProtKB"/>
</dbReference>
<dbReference type="GO" id="GO:0006426">
    <property type="term" value="P:glycyl-tRNA aminoacylation"/>
    <property type="evidence" value="ECO:0007669"/>
    <property type="project" value="UniProtKB-UniRule"/>
</dbReference>
<dbReference type="CDD" id="cd00774">
    <property type="entry name" value="GlyRS-like_core"/>
    <property type="match status" value="1"/>
</dbReference>
<dbReference type="CDD" id="cd00858">
    <property type="entry name" value="GlyRS_anticodon"/>
    <property type="match status" value="1"/>
</dbReference>
<dbReference type="FunFam" id="3.30.40.230:FF:000005">
    <property type="entry name" value="Glycine--tRNA ligase"/>
    <property type="match status" value="1"/>
</dbReference>
<dbReference type="FunFam" id="3.30.930.10:FF:000091">
    <property type="entry name" value="Glycine--tRNA ligase"/>
    <property type="match status" value="1"/>
</dbReference>
<dbReference type="FunFam" id="3.30.930.10:FF:000179">
    <property type="entry name" value="Glycine--tRNA ligase"/>
    <property type="match status" value="1"/>
</dbReference>
<dbReference type="FunFam" id="3.40.50.800:FF:000002">
    <property type="entry name" value="Glycine--tRNA ligase"/>
    <property type="match status" value="1"/>
</dbReference>
<dbReference type="FunFam" id="3.30.720.200:FF:000001">
    <property type="entry name" value="Glycine--tRNA ligase 2"/>
    <property type="match status" value="1"/>
</dbReference>
<dbReference type="Gene3D" id="3.30.40.230">
    <property type="match status" value="1"/>
</dbReference>
<dbReference type="Gene3D" id="3.30.720.200">
    <property type="match status" value="1"/>
</dbReference>
<dbReference type="Gene3D" id="3.40.50.800">
    <property type="entry name" value="Anticodon-binding domain"/>
    <property type="match status" value="1"/>
</dbReference>
<dbReference type="Gene3D" id="3.30.930.10">
    <property type="entry name" value="Bira Bifunctional Protein, Domain 2"/>
    <property type="match status" value="1"/>
</dbReference>
<dbReference type="HAMAP" id="MF_00253_A">
    <property type="entry name" value="Gly_tRNA_synth_A"/>
    <property type="match status" value="1"/>
</dbReference>
<dbReference type="InterPro" id="IPR002314">
    <property type="entry name" value="aa-tRNA-synt_IIb"/>
</dbReference>
<dbReference type="InterPro" id="IPR006195">
    <property type="entry name" value="aa-tRNA-synth_II"/>
</dbReference>
<dbReference type="InterPro" id="IPR045864">
    <property type="entry name" value="aa-tRNA-synth_II/BPL/LPL"/>
</dbReference>
<dbReference type="InterPro" id="IPR004154">
    <property type="entry name" value="Anticodon-bd"/>
</dbReference>
<dbReference type="InterPro" id="IPR036621">
    <property type="entry name" value="Anticodon-bd_dom_sf"/>
</dbReference>
<dbReference type="InterPro" id="IPR027031">
    <property type="entry name" value="Gly-tRNA_synthase/POLG2"/>
</dbReference>
<dbReference type="InterPro" id="IPR022960">
    <property type="entry name" value="Gly_tRNA_ligase_arc"/>
</dbReference>
<dbReference type="InterPro" id="IPR033731">
    <property type="entry name" value="GlyRS-like_core"/>
</dbReference>
<dbReference type="InterPro" id="IPR002315">
    <property type="entry name" value="tRNA-synt_gly"/>
</dbReference>
<dbReference type="NCBIfam" id="TIGR00389">
    <property type="entry name" value="glyS_dimeric"/>
    <property type="match status" value="1"/>
</dbReference>
<dbReference type="NCBIfam" id="NF003211">
    <property type="entry name" value="PRK04173.1"/>
    <property type="match status" value="1"/>
</dbReference>
<dbReference type="PANTHER" id="PTHR10745:SF0">
    <property type="entry name" value="GLYCINE--TRNA LIGASE"/>
    <property type="match status" value="1"/>
</dbReference>
<dbReference type="PANTHER" id="PTHR10745">
    <property type="entry name" value="GLYCYL-TRNA SYNTHETASE/DNA POLYMERASE SUBUNIT GAMMA-2"/>
    <property type="match status" value="1"/>
</dbReference>
<dbReference type="Pfam" id="PF03129">
    <property type="entry name" value="HGTP_anticodon"/>
    <property type="match status" value="1"/>
</dbReference>
<dbReference type="Pfam" id="PF00587">
    <property type="entry name" value="tRNA-synt_2b"/>
    <property type="match status" value="1"/>
</dbReference>
<dbReference type="PRINTS" id="PR01043">
    <property type="entry name" value="TRNASYNTHGLY"/>
</dbReference>
<dbReference type="SUPFAM" id="SSF52954">
    <property type="entry name" value="Class II aaRS ABD-related"/>
    <property type="match status" value="1"/>
</dbReference>
<dbReference type="SUPFAM" id="SSF55681">
    <property type="entry name" value="Class II aaRS and biotin synthetases"/>
    <property type="match status" value="1"/>
</dbReference>
<dbReference type="PROSITE" id="PS50862">
    <property type="entry name" value="AA_TRNA_LIGASE_II"/>
    <property type="match status" value="1"/>
</dbReference>
<name>SYG_PYRHO</name>
<feature type="chain" id="PRO_0000072996" description="Glycine--tRNA ligase">
    <location>
        <begin position="1"/>
        <end position="570"/>
    </location>
</feature>
<feature type="binding site" evidence="1">
    <location>
        <position position="99"/>
    </location>
    <ligand>
        <name>substrate</name>
    </ligand>
</feature>
<feature type="binding site" evidence="1">
    <location>
        <position position="165"/>
    </location>
    <ligand>
        <name>substrate</name>
    </ligand>
</feature>
<feature type="binding site" evidence="1">
    <location>
        <begin position="197"/>
        <end position="199"/>
    </location>
    <ligand>
        <name>ATP</name>
        <dbReference type="ChEBI" id="CHEBI:30616"/>
    </ligand>
</feature>
<feature type="binding site" evidence="1">
    <location>
        <begin position="207"/>
        <end position="212"/>
    </location>
    <ligand>
        <name>ATP</name>
        <dbReference type="ChEBI" id="CHEBI:30616"/>
    </ligand>
</feature>
<feature type="binding site" evidence="1">
    <location>
        <begin position="212"/>
        <end position="216"/>
    </location>
    <ligand>
        <name>substrate</name>
    </ligand>
</feature>
<feature type="binding site" evidence="1">
    <location>
        <begin position="324"/>
        <end position="325"/>
    </location>
    <ligand>
        <name>ATP</name>
        <dbReference type="ChEBI" id="CHEBI:30616"/>
    </ligand>
</feature>
<feature type="binding site" evidence="1">
    <location>
        <begin position="439"/>
        <end position="443"/>
    </location>
    <ligand>
        <name>substrate</name>
    </ligand>
</feature>
<feature type="binding site" evidence="1">
    <location>
        <begin position="443"/>
        <end position="446"/>
    </location>
    <ligand>
        <name>ATP</name>
        <dbReference type="ChEBI" id="CHEBI:30616"/>
    </ligand>
</feature>
<sequence>MNGKFDKYEYLQDLMRRRGFAWGSFEIYGGSRGFYDYGPLGATIKRKIERKIREAFIREGFFEIETPDITPEQVFIASGHVEKFVDPVVECKKCGMRFRADHLIEEFLGIDVEGKSAEEMSRIIREHGLKCPECGGELSDVFYFNLMFETYIGPYKDKKAYLRPETAQGIFVNFKRLNAFARNKLPFGVFQIGKAYRNEISPRQGMIRLREFTQAEAEIFFNPNETEHPHFNEVKHEKLKLYPIENQLKELGEVEVTAEEAVKRGYVMNSFFAYYMVMIKKILLDIGIPEDKIRFRQQLPEERAHYSADTWDAEVYSERFGWVECVGLAYRTDYDLSRHMKMSGADLTVMIHYDKPKVVKRIQVSLNMKKVGPKLKADAKKINEIIKSMDQKELEKLVKDLNEKGKVTIEGYELSKEDFIVKEVEEKITGEKIVPHVLEPSFGIDRPFYLLLENSLTVDEDGRIYLKIKKDMAPIEVAVLPLVAKEPLTTIAYEIYRTLQKEGFIVVYDEKDSIGKRYMRYDEIGTPYCVTVDNQTPEDGTVTIRDRDTREQIRVKIEELPRKLKELIFG</sequence>
<organism>
    <name type="scientific">Pyrococcus horikoshii (strain ATCC 700860 / DSM 12428 / JCM 9974 / NBRC 100139 / OT-3)</name>
    <dbReference type="NCBI Taxonomy" id="70601"/>
    <lineage>
        <taxon>Archaea</taxon>
        <taxon>Methanobacteriati</taxon>
        <taxon>Methanobacteriota</taxon>
        <taxon>Thermococci</taxon>
        <taxon>Thermococcales</taxon>
        <taxon>Thermococcaceae</taxon>
        <taxon>Pyrococcus</taxon>
    </lineage>
</organism>